<name>SNP47_HUMAN</name>
<protein>
    <recommendedName>
        <fullName>Synaptosomal-associated protein 47</fullName>
        <shortName>SNAP-47</shortName>
    </recommendedName>
    <alternativeName>
        <fullName>Epididymis luminal protein 170</fullName>
    </alternativeName>
    <alternativeName>
        <fullName>Synaptosomal-associated 47 kDa protein</fullName>
    </alternativeName>
</protein>
<accession>Q5SQN1</accession>
<accession>B6EDE0</accession>
<accession>Q5HYB5</accession>
<accession>Q5TBZ3</accession>
<accession>Q8N558</accession>
<accession>Q8TB31</accession>
<accession>Q8TCW8</accession>
<accession>Q8WV46</accession>
<accession>Q96CQ3</accession>
<accession>Q96FE1</accession>
<accession>Q96I66</accession>
<accession>Q96NU3</accession>
<accession>Q9BT10</accession>
<accession>Q9BVB2</accession>
<evidence type="ECO:0000250" key="1"/>
<evidence type="ECO:0000255" key="2">
    <source>
        <dbReference type="PROSITE-ProRule" id="PRU00202"/>
    </source>
</evidence>
<evidence type="ECO:0000256" key="3">
    <source>
        <dbReference type="SAM" id="MobiDB-lite"/>
    </source>
</evidence>
<evidence type="ECO:0000269" key="4">
    <source>
    </source>
</evidence>
<evidence type="ECO:0000269" key="5">
    <source>
    </source>
</evidence>
<evidence type="ECO:0000269" key="6">
    <source>
    </source>
</evidence>
<evidence type="ECO:0000269" key="7">
    <source ref="1"/>
</evidence>
<evidence type="ECO:0000303" key="8">
    <source>
    </source>
</evidence>
<evidence type="ECO:0000303" key="9">
    <source>
    </source>
</evidence>
<evidence type="ECO:0000303" key="10">
    <source>
    </source>
</evidence>
<evidence type="ECO:0000305" key="11"/>
<sequence>MRAARRGLHCAGAERPRRRGRLWDSSGVPQRQKRPGPWRTQTQEQMSRDVCIHTWPCTYYLEPKRRWVTGQLSLTSLSLRFMTDSTGEILVSFPLSSIVEIKKEASHFIFSSITILEKGHAKHWFSSLRPSRNVVFSIIEHFWRELLLSQPGAVADASVPRTRGEELTGLMAGSQKRLEDTARVLHHQGQQLDSVMRGLDKMESDLEVADRLLTELESPAWWPFSSKLWKTPPETKPREDVSMTSCEPFGKEGILIKIPAVISHRTESHVKPGRLTVLVSGLEIHDSSSLLMHRFEREDVDDIKVHSPYEISIRQRFIGKPDMAYRLISAKMPEVIPILEVQFSKKMELLEDALVLRSARTSSPAEKSCSVWHAASGLMGRTLHREPPAGDQEGTALHLQTSLPALSEADTQELTQILRRMKGLALEAESELERQDEALDGVAAAVDRATLTIDKHNRRMKRLT</sequence>
<organism>
    <name type="scientific">Homo sapiens</name>
    <name type="common">Human</name>
    <dbReference type="NCBI Taxonomy" id="9606"/>
    <lineage>
        <taxon>Eukaryota</taxon>
        <taxon>Metazoa</taxon>
        <taxon>Chordata</taxon>
        <taxon>Craniata</taxon>
        <taxon>Vertebrata</taxon>
        <taxon>Euteleostomi</taxon>
        <taxon>Mammalia</taxon>
        <taxon>Eutheria</taxon>
        <taxon>Euarchontoglires</taxon>
        <taxon>Primates</taxon>
        <taxon>Haplorrhini</taxon>
        <taxon>Catarrhini</taxon>
        <taxon>Hominidae</taxon>
        <taxon>Homo</taxon>
    </lineage>
</organism>
<keyword id="KW-0025">Alternative splicing</keyword>
<keyword id="KW-0175">Coiled coil</keyword>
<keyword id="KW-0963">Cytoplasm</keyword>
<keyword id="KW-0472">Membrane</keyword>
<keyword id="KW-1267">Proteomics identification</keyword>
<keyword id="KW-1185">Reference proteome</keyword>
<keyword id="KW-0677">Repeat</keyword>
<reference key="1">
    <citation type="submission" date="2002-06" db="EMBL/GenBank/DDBJ databases">
        <title>Homo sapiens GRASP protein.</title>
        <authorList>
            <person name="Yang J."/>
            <person name="Qiu Y."/>
        </authorList>
    </citation>
    <scope>NUCLEOTIDE SEQUENCE [MRNA] (ISOFORM 1)</scope>
    <scope>VARIANT MET-154</scope>
</reference>
<reference key="2">
    <citation type="journal article" date="2007" name="BMC Genomics">
        <title>The full-ORF clone resource of the German cDNA consortium.</title>
        <authorList>
            <person name="Bechtel S."/>
            <person name="Rosenfelder H."/>
            <person name="Duda A."/>
            <person name="Schmidt C.P."/>
            <person name="Ernst U."/>
            <person name="Wellenreuther R."/>
            <person name="Mehrle A."/>
            <person name="Schuster C."/>
            <person name="Bahr A."/>
            <person name="Bloecker H."/>
            <person name="Heubner D."/>
            <person name="Hoerlein A."/>
            <person name="Michel G."/>
            <person name="Wedler H."/>
            <person name="Koehrer K."/>
            <person name="Ottenwaelder B."/>
            <person name="Poustka A."/>
            <person name="Wiemann S."/>
            <person name="Schupp I."/>
        </authorList>
    </citation>
    <scope>NUCLEOTIDE SEQUENCE [LARGE SCALE MRNA] (ISOFORM 3)</scope>
    <source>
        <tissue>Colon endothelium</tissue>
    </source>
</reference>
<reference key="3">
    <citation type="journal article" date="2006" name="Nature">
        <title>The DNA sequence and biological annotation of human chromosome 1.</title>
        <authorList>
            <person name="Gregory S.G."/>
            <person name="Barlow K.F."/>
            <person name="McLay K.E."/>
            <person name="Kaul R."/>
            <person name="Swarbreck D."/>
            <person name="Dunham A."/>
            <person name="Scott C.E."/>
            <person name="Howe K.L."/>
            <person name="Woodfine K."/>
            <person name="Spencer C.C.A."/>
            <person name="Jones M.C."/>
            <person name="Gillson C."/>
            <person name="Searle S."/>
            <person name="Zhou Y."/>
            <person name="Kokocinski F."/>
            <person name="McDonald L."/>
            <person name="Evans R."/>
            <person name="Phillips K."/>
            <person name="Atkinson A."/>
            <person name="Cooper R."/>
            <person name="Jones C."/>
            <person name="Hall R.E."/>
            <person name="Andrews T.D."/>
            <person name="Lloyd C."/>
            <person name="Ainscough R."/>
            <person name="Almeida J.P."/>
            <person name="Ambrose K.D."/>
            <person name="Anderson F."/>
            <person name="Andrew R.W."/>
            <person name="Ashwell R.I.S."/>
            <person name="Aubin K."/>
            <person name="Babbage A.K."/>
            <person name="Bagguley C.L."/>
            <person name="Bailey J."/>
            <person name="Beasley H."/>
            <person name="Bethel G."/>
            <person name="Bird C.P."/>
            <person name="Bray-Allen S."/>
            <person name="Brown J.Y."/>
            <person name="Brown A.J."/>
            <person name="Buckley D."/>
            <person name="Burton J."/>
            <person name="Bye J."/>
            <person name="Carder C."/>
            <person name="Chapman J.C."/>
            <person name="Clark S.Y."/>
            <person name="Clarke G."/>
            <person name="Clee C."/>
            <person name="Cobley V."/>
            <person name="Collier R.E."/>
            <person name="Corby N."/>
            <person name="Coville G.J."/>
            <person name="Davies J."/>
            <person name="Deadman R."/>
            <person name="Dunn M."/>
            <person name="Earthrowl M."/>
            <person name="Ellington A.G."/>
            <person name="Errington H."/>
            <person name="Frankish A."/>
            <person name="Frankland J."/>
            <person name="French L."/>
            <person name="Garner P."/>
            <person name="Garnett J."/>
            <person name="Gay L."/>
            <person name="Ghori M.R.J."/>
            <person name="Gibson R."/>
            <person name="Gilby L.M."/>
            <person name="Gillett W."/>
            <person name="Glithero R.J."/>
            <person name="Grafham D.V."/>
            <person name="Griffiths C."/>
            <person name="Griffiths-Jones S."/>
            <person name="Grocock R."/>
            <person name="Hammond S."/>
            <person name="Harrison E.S.I."/>
            <person name="Hart E."/>
            <person name="Haugen E."/>
            <person name="Heath P.D."/>
            <person name="Holmes S."/>
            <person name="Holt K."/>
            <person name="Howden P.J."/>
            <person name="Hunt A.R."/>
            <person name="Hunt S.E."/>
            <person name="Hunter G."/>
            <person name="Isherwood J."/>
            <person name="James R."/>
            <person name="Johnson C."/>
            <person name="Johnson D."/>
            <person name="Joy A."/>
            <person name="Kay M."/>
            <person name="Kershaw J.K."/>
            <person name="Kibukawa M."/>
            <person name="Kimberley A.M."/>
            <person name="King A."/>
            <person name="Knights A.J."/>
            <person name="Lad H."/>
            <person name="Laird G."/>
            <person name="Lawlor S."/>
            <person name="Leongamornlert D.A."/>
            <person name="Lloyd D.M."/>
            <person name="Loveland J."/>
            <person name="Lovell J."/>
            <person name="Lush M.J."/>
            <person name="Lyne R."/>
            <person name="Martin S."/>
            <person name="Mashreghi-Mohammadi M."/>
            <person name="Matthews L."/>
            <person name="Matthews N.S.W."/>
            <person name="McLaren S."/>
            <person name="Milne S."/>
            <person name="Mistry S."/>
            <person name="Moore M.J.F."/>
            <person name="Nickerson T."/>
            <person name="O'Dell C.N."/>
            <person name="Oliver K."/>
            <person name="Palmeiri A."/>
            <person name="Palmer S.A."/>
            <person name="Parker A."/>
            <person name="Patel D."/>
            <person name="Pearce A.V."/>
            <person name="Peck A.I."/>
            <person name="Pelan S."/>
            <person name="Phelps K."/>
            <person name="Phillimore B.J."/>
            <person name="Plumb R."/>
            <person name="Rajan J."/>
            <person name="Raymond C."/>
            <person name="Rouse G."/>
            <person name="Saenphimmachak C."/>
            <person name="Sehra H.K."/>
            <person name="Sheridan E."/>
            <person name="Shownkeen R."/>
            <person name="Sims S."/>
            <person name="Skuce C.D."/>
            <person name="Smith M."/>
            <person name="Steward C."/>
            <person name="Subramanian S."/>
            <person name="Sycamore N."/>
            <person name="Tracey A."/>
            <person name="Tromans A."/>
            <person name="Van Helmond Z."/>
            <person name="Wall M."/>
            <person name="Wallis J.M."/>
            <person name="White S."/>
            <person name="Whitehead S.L."/>
            <person name="Wilkinson J.E."/>
            <person name="Willey D.L."/>
            <person name="Williams H."/>
            <person name="Wilming L."/>
            <person name="Wray P.W."/>
            <person name="Wu Z."/>
            <person name="Coulson A."/>
            <person name="Vaudin M."/>
            <person name="Sulston J.E."/>
            <person name="Durbin R.M."/>
            <person name="Hubbard T."/>
            <person name="Wooster R."/>
            <person name="Dunham I."/>
            <person name="Carter N.P."/>
            <person name="McVean G."/>
            <person name="Ross M.T."/>
            <person name="Harrow J."/>
            <person name="Olson M.V."/>
            <person name="Beck S."/>
            <person name="Rogers J."/>
            <person name="Bentley D.R."/>
        </authorList>
    </citation>
    <scope>NUCLEOTIDE SEQUENCE [LARGE SCALE GENOMIC DNA]</scope>
</reference>
<reference key="4">
    <citation type="submission" date="2005-07" db="EMBL/GenBank/DDBJ databases">
        <authorList>
            <person name="Mural R.J."/>
            <person name="Istrail S."/>
            <person name="Sutton G.G."/>
            <person name="Florea L."/>
            <person name="Halpern A.L."/>
            <person name="Mobarry C.M."/>
            <person name="Lippert R."/>
            <person name="Walenz B."/>
            <person name="Shatkay H."/>
            <person name="Dew I."/>
            <person name="Miller J.R."/>
            <person name="Flanigan M.J."/>
            <person name="Edwards N.J."/>
            <person name="Bolanos R."/>
            <person name="Fasulo D."/>
            <person name="Halldorsson B.V."/>
            <person name="Hannenhalli S."/>
            <person name="Turner R."/>
            <person name="Yooseph S."/>
            <person name="Lu F."/>
            <person name="Nusskern D.R."/>
            <person name="Shue B.C."/>
            <person name="Zheng X.H."/>
            <person name="Zhong F."/>
            <person name="Delcher A.L."/>
            <person name="Huson D.H."/>
            <person name="Kravitz S.A."/>
            <person name="Mouchard L."/>
            <person name="Reinert K."/>
            <person name="Remington K.A."/>
            <person name="Clark A.G."/>
            <person name="Waterman M.S."/>
            <person name="Eichler E.E."/>
            <person name="Adams M.D."/>
            <person name="Hunkapiller M.W."/>
            <person name="Myers E.W."/>
            <person name="Venter J.C."/>
        </authorList>
    </citation>
    <scope>NUCLEOTIDE SEQUENCE [LARGE SCALE GENOMIC DNA]</scope>
</reference>
<reference key="5">
    <citation type="journal article" date="2004" name="Genome Res.">
        <title>The status, quality, and expansion of the NIH full-length cDNA project: the Mammalian Gene Collection (MGC).</title>
        <authorList>
            <consortium name="The MGC Project Team"/>
        </authorList>
    </citation>
    <scope>NUCLEOTIDE SEQUENCE [LARGE SCALE MRNA] (ISOFORMS 1 AND 4)</scope>
    <scope>VARIANTS ARG-119; MET-154 AND CYS-381</scope>
    <source>
        <tissue>Cervix</tissue>
        <tissue>Kidney</tissue>
        <tissue>Lung</tissue>
        <tissue>Muscle</tissue>
        <tissue>Ovary</tissue>
        <tissue>Pancreas</tissue>
        <tissue>Placenta</tissue>
    </source>
</reference>
<reference key="6">
    <citation type="journal article" date="2004" name="Nat. Genet.">
        <title>Complete sequencing and characterization of 21,243 full-length human cDNAs.</title>
        <authorList>
            <person name="Ota T."/>
            <person name="Suzuki Y."/>
            <person name="Nishikawa T."/>
            <person name="Otsuki T."/>
            <person name="Sugiyama T."/>
            <person name="Irie R."/>
            <person name="Wakamatsu A."/>
            <person name="Hayashi K."/>
            <person name="Sato H."/>
            <person name="Nagai K."/>
            <person name="Kimura K."/>
            <person name="Makita H."/>
            <person name="Sekine M."/>
            <person name="Obayashi M."/>
            <person name="Nishi T."/>
            <person name="Shibahara T."/>
            <person name="Tanaka T."/>
            <person name="Ishii S."/>
            <person name="Yamamoto J."/>
            <person name="Saito K."/>
            <person name="Kawai Y."/>
            <person name="Isono Y."/>
            <person name="Nakamura Y."/>
            <person name="Nagahari K."/>
            <person name="Murakami K."/>
            <person name="Yasuda T."/>
            <person name="Iwayanagi T."/>
            <person name="Wagatsuma M."/>
            <person name="Shiratori A."/>
            <person name="Sudo H."/>
            <person name="Hosoiri T."/>
            <person name="Kaku Y."/>
            <person name="Kodaira H."/>
            <person name="Kondo H."/>
            <person name="Sugawara M."/>
            <person name="Takahashi M."/>
            <person name="Kanda K."/>
            <person name="Yokoi T."/>
            <person name="Furuya T."/>
            <person name="Kikkawa E."/>
            <person name="Omura Y."/>
            <person name="Abe K."/>
            <person name="Kamihara K."/>
            <person name="Katsuta N."/>
            <person name="Sato K."/>
            <person name="Tanikawa M."/>
            <person name="Yamazaki M."/>
            <person name="Ninomiya K."/>
            <person name="Ishibashi T."/>
            <person name="Yamashita H."/>
            <person name="Murakawa K."/>
            <person name="Fujimori K."/>
            <person name="Tanai H."/>
            <person name="Kimata M."/>
            <person name="Watanabe M."/>
            <person name="Hiraoka S."/>
            <person name="Chiba Y."/>
            <person name="Ishida S."/>
            <person name="Ono Y."/>
            <person name="Takiguchi S."/>
            <person name="Watanabe S."/>
            <person name="Yosida M."/>
            <person name="Hotuta T."/>
            <person name="Kusano J."/>
            <person name="Kanehori K."/>
            <person name="Takahashi-Fujii A."/>
            <person name="Hara H."/>
            <person name="Tanase T.-O."/>
            <person name="Nomura Y."/>
            <person name="Togiya S."/>
            <person name="Komai F."/>
            <person name="Hara R."/>
            <person name="Takeuchi K."/>
            <person name="Arita M."/>
            <person name="Imose N."/>
            <person name="Musashino K."/>
            <person name="Yuuki H."/>
            <person name="Oshima A."/>
            <person name="Sasaki N."/>
            <person name="Aotsuka S."/>
            <person name="Yoshikawa Y."/>
            <person name="Matsunawa H."/>
            <person name="Ichihara T."/>
            <person name="Shiohata N."/>
            <person name="Sano S."/>
            <person name="Moriya S."/>
            <person name="Momiyama H."/>
            <person name="Satoh N."/>
            <person name="Takami S."/>
            <person name="Terashima Y."/>
            <person name="Suzuki O."/>
            <person name="Nakagawa S."/>
            <person name="Senoh A."/>
            <person name="Mizoguchi H."/>
            <person name="Goto Y."/>
            <person name="Shimizu F."/>
            <person name="Wakebe H."/>
            <person name="Hishigaki H."/>
            <person name="Watanabe T."/>
            <person name="Sugiyama A."/>
            <person name="Takemoto M."/>
            <person name="Kawakami B."/>
            <person name="Yamazaki M."/>
            <person name="Watanabe K."/>
            <person name="Kumagai A."/>
            <person name="Itakura S."/>
            <person name="Fukuzumi Y."/>
            <person name="Fujimori Y."/>
            <person name="Komiyama M."/>
            <person name="Tashiro H."/>
            <person name="Tanigami A."/>
            <person name="Fujiwara T."/>
            <person name="Ono T."/>
            <person name="Yamada K."/>
            <person name="Fujii Y."/>
            <person name="Ozaki K."/>
            <person name="Hirao M."/>
            <person name="Ohmori Y."/>
            <person name="Kawabata A."/>
            <person name="Hikiji T."/>
            <person name="Kobatake N."/>
            <person name="Inagaki H."/>
            <person name="Ikema Y."/>
            <person name="Okamoto S."/>
            <person name="Okitani R."/>
            <person name="Kawakami T."/>
            <person name="Noguchi S."/>
            <person name="Itoh T."/>
            <person name="Shigeta K."/>
            <person name="Senba T."/>
            <person name="Matsumura K."/>
            <person name="Nakajima Y."/>
            <person name="Mizuno T."/>
            <person name="Morinaga M."/>
            <person name="Sasaki M."/>
            <person name="Togashi T."/>
            <person name="Oyama M."/>
            <person name="Hata H."/>
            <person name="Watanabe M."/>
            <person name="Komatsu T."/>
            <person name="Mizushima-Sugano J."/>
            <person name="Satoh T."/>
            <person name="Shirai Y."/>
            <person name="Takahashi Y."/>
            <person name="Nakagawa K."/>
            <person name="Okumura K."/>
            <person name="Nagase T."/>
            <person name="Nomura N."/>
            <person name="Kikuchi H."/>
            <person name="Masuho Y."/>
            <person name="Yamashita R."/>
            <person name="Nakai K."/>
            <person name="Yada T."/>
            <person name="Nakamura Y."/>
            <person name="Ohara O."/>
            <person name="Isogai T."/>
            <person name="Sugano S."/>
        </authorList>
    </citation>
    <scope>NUCLEOTIDE SEQUENCE [LARGE SCALE MRNA] OF 10-464 (ISOFORM 2)</scope>
    <scope>VARIANT CYS-381</scope>
    <source>
        <tissue>Astrocyte</tissue>
    </source>
</reference>
<reference key="7">
    <citation type="submission" date="2008-09" db="EMBL/GenBank/DDBJ databases">
        <authorList>
            <person name="Li J."/>
            <person name="Wang H."/>
        </authorList>
    </citation>
    <scope>NUCLEOTIDE SEQUENCE [LARGE SCALE MRNA] OF 30-464 (ISOFORM 1)</scope>
</reference>
<reference key="8">
    <citation type="journal article" date="2010" name="Mol. Psychiatry">
        <title>The dysbindin-containing complex (BLOC-1) in brain: developmental regulation, interaction with SNARE proteins and role in neurite outgrowth.</title>
        <authorList>
            <person name="Ghiani C.A."/>
            <person name="Starcevic M."/>
            <person name="Rodriguez-Fernandez I.A."/>
            <person name="Nazarian R."/>
            <person name="Cheli V.T."/>
            <person name="Chan L.N."/>
            <person name="Malvar J.S."/>
            <person name="de Vellis J."/>
            <person name="Sabatti C."/>
            <person name="Dell'Angelica E.C."/>
        </authorList>
    </citation>
    <scope>ASSOCIATION WITH THE BLOC-1 COMPLEX</scope>
    <scope>INTERACTION WITH BLOC1S6</scope>
</reference>
<gene>
    <name type="primary">SNAP47</name>
    <name type="synonym">C1orf142</name>
    <name type="synonym">HEL170</name>
    <name type="synonym">SVAP1</name>
</gene>
<dbReference type="EMBL" id="AY090635">
    <property type="protein sequence ID" value="AAM09082.1"/>
    <property type="molecule type" value="mRNA"/>
</dbReference>
<dbReference type="EMBL" id="BX648570">
    <property type="protein sequence ID" value="CAI45994.1"/>
    <property type="molecule type" value="mRNA"/>
</dbReference>
<dbReference type="EMBL" id="AL136378">
    <property type="status" value="NOT_ANNOTATED_CDS"/>
    <property type="molecule type" value="Genomic_DNA"/>
</dbReference>
<dbReference type="EMBL" id="AL731702">
    <property type="status" value="NOT_ANNOTATED_CDS"/>
    <property type="molecule type" value="Genomic_DNA"/>
</dbReference>
<dbReference type="EMBL" id="CH471098">
    <property type="protein sequence ID" value="EAW69817.1"/>
    <property type="molecule type" value="Genomic_DNA"/>
</dbReference>
<dbReference type="EMBL" id="BC001332">
    <property type="protein sequence ID" value="AAH01332.1"/>
    <property type="molecule type" value="mRNA"/>
</dbReference>
<dbReference type="EMBL" id="BC004418">
    <property type="protein sequence ID" value="AAH04418.1"/>
    <property type="molecule type" value="mRNA"/>
</dbReference>
<dbReference type="EMBL" id="BC007786">
    <property type="protein sequence ID" value="AAH07786.2"/>
    <property type="molecule type" value="mRNA"/>
</dbReference>
<dbReference type="EMBL" id="BC011145">
    <property type="protein sequence ID" value="AAH11145.1"/>
    <property type="molecule type" value="mRNA"/>
</dbReference>
<dbReference type="EMBL" id="BC014059">
    <property type="protein sequence ID" value="AAH14059.2"/>
    <property type="molecule type" value="mRNA"/>
</dbReference>
<dbReference type="EMBL" id="BC018760">
    <property type="protein sequence ID" value="AAH18760.2"/>
    <property type="molecule type" value="mRNA"/>
</dbReference>
<dbReference type="EMBL" id="BC025231">
    <property type="protein sequence ID" value="AAH25231.1"/>
    <property type="molecule type" value="mRNA"/>
</dbReference>
<dbReference type="EMBL" id="BC032775">
    <property type="protein sequence ID" value="AAH32775.1"/>
    <property type="molecule type" value="mRNA"/>
</dbReference>
<dbReference type="EMBL" id="AK054633">
    <property type="protein sequence ID" value="BAB70779.1"/>
    <property type="status" value="ALT_INIT"/>
    <property type="molecule type" value="mRNA"/>
</dbReference>
<dbReference type="EMBL" id="FJ236305">
    <property type="protein sequence ID" value="ACI45237.1"/>
    <property type="molecule type" value="mRNA"/>
</dbReference>
<dbReference type="RefSeq" id="NP_001310864.1">
    <molecule id="Q5SQN1-2"/>
    <property type="nucleotide sequence ID" value="NM_001323935.1"/>
</dbReference>
<dbReference type="RefSeq" id="NP_444280.2">
    <property type="nucleotide sequence ID" value="NM_053052.3"/>
</dbReference>
<dbReference type="RefSeq" id="XP_016855720.1">
    <property type="nucleotide sequence ID" value="XM_017000231.1"/>
</dbReference>
<dbReference type="RefSeq" id="XP_016855721.1">
    <molecule id="Q5SQN1-1"/>
    <property type="nucleotide sequence ID" value="XM_017000232.2"/>
</dbReference>
<dbReference type="RefSeq" id="XP_047300075.1">
    <molecule id="Q5SQN1-1"/>
    <property type="nucleotide sequence ID" value="XM_047444119.1"/>
</dbReference>
<dbReference type="RefSeq" id="XP_054190144.1">
    <molecule id="Q5SQN1-1"/>
    <property type="nucleotide sequence ID" value="XM_054334169.1"/>
</dbReference>
<dbReference type="RefSeq" id="XP_054190145.1">
    <molecule id="Q5SQN1-1"/>
    <property type="nucleotide sequence ID" value="XM_054334170.1"/>
</dbReference>
<dbReference type="SMR" id="Q5SQN1"/>
<dbReference type="BioGRID" id="125534">
    <property type="interactions" value="212"/>
</dbReference>
<dbReference type="FunCoup" id="Q5SQN1">
    <property type="interactions" value="774"/>
</dbReference>
<dbReference type="IntAct" id="Q5SQN1">
    <property type="interactions" value="68"/>
</dbReference>
<dbReference type="MINT" id="Q5SQN1"/>
<dbReference type="STRING" id="9606.ENSP00000314157"/>
<dbReference type="GlyCosmos" id="Q5SQN1">
    <property type="glycosylation" value="1 site, 1 glycan"/>
</dbReference>
<dbReference type="GlyGen" id="Q5SQN1">
    <property type="glycosylation" value="2 sites, 1 O-linked glycan (2 sites)"/>
</dbReference>
<dbReference type="iPTMnet" id="Q5SQN1"/>
<dbReference type="PhosphoSitePlus" id="Q5SQN1"/>
<dbReference type="BioMuta" id="SNAP47"/>
<dbReference type="DMDM" id="238054367"/>
<dbReference type="jPOST" id="Q5SQN1"/>
<dbReference type="MassIVE" id="Q5SQN1"/>
<dbReference type="PaxDb" id="9606-ENSP00000314157"/>
<dbReference type="PeptideAtlas" id="Q5SQN1"/>
<dbReference type="ProteomicsDB" id="63811">
    <molecule id="Q5SQN1-1"/>
</dbReference>
<dbReference type="ProteomicsDB" id="63812">
    <molecule id="Q5SQN1-2"/>
</dbReference>
<dbReference type="ProteomicsDB" id="63813">
    <molecule id="Q5SQN1-3"/>
</dbReference>
<dbReference type="ProteomicsDB" id="63814">
    <molecule id="Q5SQN1-4"/>
</dbReference>
<dbReference type="Pumba" id="Q5SQN1"/>
<dbReference type="Antibodypedia" id="34657">
    <property type="antibodies" value="41 antibodies from 16 providers"/>
</dbReference>
<dbReference type="DNASU" id="116841"/>
<dbReference type="Ensembl" id="ENST00000366760.5">
    <molecule id="Q5SQN1-4"/>
    <property type="protein sequence ID" value="ENSP00000355722.1"/>
    <property type="gene ID" value="ENSG00000143740.15"/>
</dbReference>
<dbReference type="Ensembl" id="ENST00000418653.6">
    <molecule id="Q5SQN1-3"/>
    <property type="protein sequence ID" value="ENSP00000402730.2"/>
    <property type="gene ID" value="ENSG00000143740.15"/>
</dbReference>
<dbReference type="Ensembl" id="ENST00000679561.1">
    <molecule id="Q5SQN1-4"/>
    <property type="protein sequence ID" value="ENSP00000504959.1"/>
    <property type="gene ID" value="ENSG00000143740.15"/>
</dbReference>
<dbReference type="Ensembl" id="ENST00000680695.1">
    <molecule id="Q5SQN1-4"/>
    <property type="protein sequence ID" value="ENSP00000506091.1"/>
    <property type="gene ID" value="ENSG00000143740.15"/>
</dbReference>
<dbReference type="Ensembl" id="ENST00000681929.1">
    <molecule id="Q5SQN1-4"/>
    <property type="protein sequence ID" value="ENSP00000505648.1"/>
    <property type="gene ID" value="ENSG00000143740.15"/>
</dbReference>
<dbReference type="GeneID" id="116841"/>
<dbReference type="KEGG" id="hsa:116841"/>
<dbReference type="UCSC" id="uc001hra.3">
    <molecule id="Q5SQN1-1"/>
    <property type="organism name" value="human"/>
</dbReference>
<dbReference type="AGR" id="HGNC:30669"/>
<dbReference type="CTD" id="116841"/>
<dbReference type="DisGeNET" id="116841"/>
<dbReference type="GeneCards" id="SNAP47"/>
<dbReference type="HGNC" id="HGNC:30669">
    <property type="gene designation" value="SNAP47"/>
</dbReference>
<dbReference type="HPA" id="ENSG00000143740">
    <property type="expression patterns" value="Low tissue specificity"/>
</dbReference>
<dbReference type="MIM" id="619659">
    <property type="type" value="gene"/>
</dbReference>
<dbReference type="neXtProt" id="NX_Q5SQN1"/>
<dbReference type="OpenTargets" id="ENSG00000143740"/>
<dbReference type="PharmGKB" id="PA164725983"/>
<dbReference type="VEuPathDB" id="HostDB:ENSG00000143740"/>
<dbReference type="eggNOG" id="KOG3065">
    <property type="taxonomic scope" value="Eukaryota"/>
</dbReference>
<dbReference type="GeneTree" id="ENSGT00950000182843"/>
<dbReference type="HOGENOM" id="CLU_1102480_0_0_1"/>
<dbReference type="InParanoid" id="Q5SQN1"/>
<dbReference type="OMA" id="DICIHTW"/>
<dbReference type="OrthoDB" id="10009801at2759"/>
<dbReference type="PAN-GO" id="Q5SQN1">
    <property type="GO annotations" value="7 GO annotations based on evolutionary models"/>
</dbReference>
<dbReference type="PhylomeDB" id="Q5SQN1"/>
<dbReference type="TreeFam" id="TF331066"/>
<dbReference type="PathwayCommons" id="Q5SQN1"/>
<dbReference type="SignaLink" id="Q5SQN1"/>
<dbReference type="BioGRID-ORCS" id="116841">
    <property type="hits" value="15 hits in 1167 CRISPR screens"/>
</dbReference>
<dbReference type="ChiTaRS" id="SNAP47">
    <property type="organism name" value="human"/>
</dbReference>
<dbReference type="GenomeRNAi" id="116841"/>
<dbReference type="Pharos" id="Q5SQN1">
    <property type="development level" value="Tdark"/>
</dbReference>
<dbReference type="PRO" id="PR:Q5SQN1"/>
<dbReference type="Proteomes" id="UP000005640">
    <property type="component" value="Chromosome 1"/>
</dbReference>
<dbReference type="RNAct" id="Q5SQN1">
    <property type="molecule type" value="protein"/>
</dbReference>
<dbReference type="Bgee" id="ENSG00000143740">
    <property type="expression patterns" value="Expressed in pancreatic ductal cell and 178 other cell types or tissues"/>
</dbReference>
<dbReference type="ExpressionAtlas" id="Q5SQN1">
    <property type="expression patterns" value="baseline and differential"/>
</dbReference>
<dbReference type="GO" id="GO:0012505">
    <property type="term" value="C:endomembrane system"/>
    <property type="evidence" value="ECO:0007669"/>
    <property type="project" value="UniProtKB-SubCell"/>
</dbReference>
<dbReference type="GO" id="GO:0048471">
    <property type="term" value="C:perinuclear region of cytoplasm"/>
    <property type="evidence" value="ECO:0007669"/>
    <property type="project" value="UniProtKB-SubCell"/>
</dbReference>
<dbReference type="GO" id="GO:0005886">
    <property type="term" value="C:plasma membrane"/>
    <property type="evidence" value="ECO:0000318"/>
    <property type="project" value="GO_Central"/>
</dbReference>
<dbReference type="GO" id="GO:0098793">
    <property type="term" value="C:presynapse"/>
    <property type="evidence" value="ECO:0007669"/>
    <property type="project" value="GOC"/>
</dbReference>
<dbReference type="GO" id="GO:0031201">
    <property type="term" value="C:SNARE complex"/>
    <property type="evidence" value="ECO:0000318"/>
    <property type="project" value="GO_Central"/>
</dbReference>
<dbReference type="GO" id="GO:0005484">
    <property type="term" value="F:SNAP receptor activity"/>
    <property type="evidence" value="ECO:0000318"/>
    <property type="project" value="GO_Central"/>
</dbReference>
<dbReference type="GO" id="GO:0019905">
    <property type="term" value="F:syntaxin binding"/>
    <property type="evidence" value="ECO:0000318"/>
    <property type="project" value="GO_Central"/>
</dbReference>
<dbReference type="GO" id="GO:0006887">
    <property type="term" value="P:exocytosis"/>
    <property type="evidence" value="ECO:0000318"/>
    <property type="project" value="GO_Central"/>
</dbReference>
<dbReference type="GO" id="GO:0031629">
    <property type="term" value="P:synaptic vesicle fusion to presynaptic active zone membrane"/>
    <property type="evidence" value="ECO:0000318"/>
    <property type="project" value="GO_Central"/>
</dbReference>
<dbReference type="GO" id="GO:0016082">
    <property type="term" value="P:synaptic vesicle priming"/>
    <property type="evidence" value="ECO:0000318"/>
    <property type="project" value="GO_Central"/>
</dbReference>
<dbReference type="CDD" id="cd15854">
    <property type="entry name" value="SNARE_SNAP47C"/>
    <property type="match status" value="1"/>
</dbReference>
<dbReference type="CDD" id="cd15888">
    <property type="entry name" value="SNARE_SNAP47N"/>
    <property type="match status" value="1"/>
</dbReference>
<dbReference type="FunFam" id="2.30.29.30:FF:000269">
    <property type="entry name" value="Synaptosomal-associated protein 47"/>
    <property type="match status" value="1"/>
</dbReference>
<dbReference type="FunFam" id="1.20.5.110:FF:000052">
    <property type="entry name" value="synaptosomal-associated protein 47"/>
    <property type="match status" value="1"/>
</dbReference>
<dbReference type="FunFam" id="1.20.5.110:FF:000061">
    <property type="entry name" value="Synaptosome associated protein 47"/>
    <property type="match status" value="1"/>
</dbReference>
<dbReference type="Gene3D" id="1.20.5.110">
    <property type="match status" value="2"/>
</dbReference>
<dbReference type="Gene3D" id="2.30.29.30">
    <property type="entry name" value="Pleckstrin-homology domain (PH domain)/Phosphotyrosine-binding domain (PTB)"/>
    <property type="match status" value="1"/>
</dbReference>
<dbReference type="InterPro" id="IPR004182">
    <property type="entry name" value="GRAM"/>
</dbReference>
<dbReference type="InterPro" id="IPR011993">
    <property type="entry name" value="PH-like_dom_sf"/>
</dbReference>
<dbReference type="InterPro" id="IPR000727">
    <property type="entry name" value="T_SNARE_dom"/>
</dbReference>
<dbReference type="PANTHER" id="PTHR19305">
    <property type="entry name" value="SYNAPTOSOMAL ASSOCIATED PROTEIN"/>
    <property type="match status" value="1"/>
</dbReference>
<dbReference type="PANTHER" id="PTHR19305:SF1">
    <property type="entry name" value="SYNAPTOSOMAL-ASSOCIATED PROTEIN 47"/>
    <property type="match status" value="1"/>
</dbReference>
<dbReference type="Pfam" id="PF02893">
    <property type="entry name" value="GRAM"/>
    <property type="match status" value="1"/>
</dbReference>
<dbReference type="SUPFAM" id="SSF58038">
    <property type="entry name" value="SNARE fusion complex"/>
    <property type="match status" value="2"/>
</dbReference>
<dbReference type="PROSITE" id="PS50192">
    <property type="entry name" value="T_SNARE"/>
    <property type="match status" value="2"/>
</dbReference>
<feature type="chain" id="PRO_0000307151" description="Synaptosomal-associated protein 47">
    <location>
        <begin position="1"/>
        <end position="464"/>
    </location>
</feature>
<feature type="domain" description="t-SNARE coiled-coil homology 1" evidence="2">
    <location>
        <begin position="154"/>
        <end position="216"/>
    </location>
</feature>
<feature type="domain" description="t-SNARE coiled-coil homology 2" evidence="2">
    <location>
        <begin position="401"/>
        <end position="463"/>
    </location>
</feature>
<feature type="region of interest" description="Disordered" evidence="3">
    <location>
        <begin position="20"/>
        <end position="42"/>
    </location>
</feature>
<feature type="splice variant" id="VSP_028613" description="In isoform 3 and isoform 4." evidence="9 10">
    <location>
        <begin position="1"/>
        <end position="242"/>
    </location>
</feature>
<feature type="splice variant" id="VSP_028614" description="In isoform 2 and isoform 3." evidence="8 10">
    <original>ILRRMKGLALEAESELERQDEALDGVAAAVDRATLTIDKHNRRMKRLT</original>
    <variation>GFRPMSLSTQTVLVMLCSESAGALWRQRLS</variation>
    <location>
        <begin position="417"/>
        <end position="464"/>
    </location>
</feature>
<feature type="sequence variant" id="VAR_035367" description="In dbSNP:rs2236359.">
    <original>R</original>
    <variation>G</variation>
    <location>
        <position position="48"/>
    </location>
</feature>
<feature type="sequence variant" id="VAR_035368" description="In dbSNP:rs12239037." evidence="5">
    <original>G</original>
    <variation>R</variation>
    <location>
        <position position="119"/>
    </location>
</feature>
<feature type="sequence variant" id="VAR_035369" description="In dbSNP:rs2236358." evidence="5 7">
    <original>V</original>
    <variation>M</variation>
    <location>
        <position position="154"/>
    </location>
</feature>
<feature type="sequence variant" id="VAR_035370" description="In dbSNP:rs17851681." evidence="4 5">
    <original>R</original>
    <variation>C</variation>
    <location>
        <position position="381"/>
    </location>
</feature>
<feature type="sequence conflict" description="In Ref. 5; AAH01332." evidence="11" ref="5">
    <original>DST</original>
    <variation>TRP</variation>
    <location>
        <begin position="84"/>
        <end position="86"/>
    </location>
</feature>
<comment type="function">
    <text evidence="1">Plays a role in intracellular membrane fusion.</text>
</comment>
<comment type="subunit">
    <text evidence="1 6">Forms a complex containing SNAP47, VAMP2 and STX1A (By similarity). Associates with the BLOC-1 complex. Interacts with BLOC1S6.</text>
</comment>
<comment type="interaction">
    <interactant intactId="EBI-10244848">
        <id>Q5SQN1</id>
    </interactant>
    <interactant intactId="EBI-18302142">
        <id>P55056</id>
        <label>APOC4</label>
    </interactant>
    <organismsDiffer>false</organismsDiffer>
    <experiments>3</experiments>
</comment>
<comment type="interaction">
    <interactant intactId="EBI-10244848">
        <id>Q5SQN1</id>
    </interactant>
    <interactant intactId="EBI-12701138">
        <id>P41181</id>
        <label>AQP2</label>
    </interactant>
    <organismsDiffer>false</organismsDiffer>
    <experiments>3</experiments>
</comment>
<comment type="interaction">
    <interactant intactId="EBI-10244848">
        <id>Q5SQN1</id>
    </interactant>
    <interactant intactId="EBI-10181988">
        <id>Q8IYX8-2</id>
        <label>CEP57L1</label>
    </interactant>
    <organismsDiffer>false</organismsDiffer>
    <experiments>3</experiments>
</comment>
<comment type="interaction">
    <interactant intactId="EBI-10244848">
        <id>Q5SQN1</id>
    </interactant>
    <interactant intactId="EBI-742600">
        <id>Q9Y624</id>
        <label>F11R</label>
    </interactant>
    <organismsDiffer>false</organismsDiffer>
    <experiments>3</experiments>
</comment>
<comment type="interaction">
    <interactant intactId="EBI-10244848">
        <id>Q5SQN1</id>
    </interactant>
    <interactant intactId="EBI-10175124">
        <id>Q8IZU0</id>
        <label>FAM9B</label>
    </interactant>
    <organismsDiffer>false</organismsDiffer>
    <experiments>3</experiments>
</comment>
<comment type="interaction">
    <interactant intactId="EBI-10244848">
        <id>Q5SQN1</id>
    </interactant>
    <interactant intactId="EBI-743099">
        <id>Q969F0</id>
        <label>FATE1</label>
    </interactant>
    <organismsDiffer>false</organismsDiffer>
    <experiments>3</experiments>
</comment>
<comment type="interaction">
    <interactant intactId="EBI-10244848">
        <id>Q5SQN1</id>
    </interactant>
    <interactant intactId="EBI-618309">
        <id>Q08379</id>
        <label>GOLGA2</label>
    </interactant>
    <organismsDiffer>false</organismsDiffer>
    <experiments>3</experiments>
</comment>
<comment type="interaction">
    <interactant intactId="EBI-10244848">
        <id>Q5SQN1</id>
    </interactant>
    <interactant intactId="EBI-749265">
        <id>Q8N6L0</id>
        <label>KASH5</label>
    </interactant>
    <organismsDiffer>false</organismsDiffer>
    <experiments>3</experiments>
</comment>
<comment type="interaction">
    <interactant intactId="EBI-10244848">
        <id>Q5SQN1</id>
    </interactant>
    <interactant intactId="EBI-1643885">
        <id>Q6P597</id>
        <label>KLC3</label>
    </interactant>
    <organismsDiffer>false</organismsDiffer>
    <experiments>3</experiments>
</comment>
<comment type="interaction">
    <interactant intactId="EBI-10244848">
        <id>Q5SQN1</id>
    </interactant>
    <interactant intactId="EBI-2830566">
        <id>Q9H400</id>
        <label>LIME1</label>
    </interactant>
    <organismsDiffer>false</organismsDiffer>
    <experiments>3</experiments>
</comment>
<comment type="interaction">
    <interactant intactId="EBI-10244848">
        <id>Q5SQN1</id>
    </interactant>
    <interactant intactId="EBI-3925442">
        <id>Q9HCJ2</id>
        <label>LRRC4C</label>
    </interactant>
    <organismsDiffer>false</organismsDiffer>
    <experiments>3</experiments>
</comment>
<comment type="interaction">
    <interactant intactId="EBI-10244848">
        <id>Q5SQN1</id>
    </interactant>
    <interactant intactId="EBI-1045155">
        <id>P43360</id>
        <label>MAGEA6</label>
    </interactant>
    <organismsDiffer>false</organismsDiffer>
    <experiments>3</experiments>
</comment>
<comment type="interaction">
    <interactant intactId="EBI-10244848">
        <id>Q5SQN1</id>
    </interactant>
    <interactant intactId="EBI-724754">
        <id>O14880</id>
        <label>MGST3</label>
    </interactant>
    <organismsDiffer>false</organismsDiffer>
    <experiments>3</experiments>
</comment>
<comment type="interaction">
    <interactant intactId="EBI-10244848">
        <id>Q5SQN1</id>
    </interactant>
    <interactant intactId="EBI-10172526">
        <id>Q9UJV3-2</id>
        <label>MID2</label>
    </interactant>
    <organismsDiffer>false</organismsDiffer>
    <experiments>3</experiments>
</comment>
<comment type="interaction">
    <interactant intactId="EBI-10244848">
        <id>Q5SQN1</id>
    </interactant>
    <interactant intactId="EBI-3919694">
        <id>P15151</id>
        <label>PVR</label>
    </interactant>
    <organismsDiffer>false</organismsDiffer>
    <experiments>3</experiments>
</comment>
<comment type="interaction">
    <interactant intactId="EBI-10244848">
        <id>Q5SQN1</id>
    </interactant>
    <interactant intactId="EBI-12055631">
        <id>Q96K19-5</id>
        <label>RNF170</label>
    </interactant>
    <organismsDiffer>false</organismsDiffer>
    <experiments>3</experiments>
</comment>
<comment type="interaction">
    <interactant intactId="EBI-10244848">
        <id>Q5SQN1</id>
    </interactant>
    <interactant intactId="EBI-3920694">
        <id>Q9NR31</id>
        <label>SAR1A</label>
    </interactant>
    <organismsDiffer>false</organismsDiffer>
    <experiments>3</experiments>
</comment>
<comment type="interaction">
    <interactant intactId="EBI-10244848">
        <id>Q5SQN1</id>
    </interactant>
    <interactant intactId="EBI-413317">
        <id>Q96R06</id>
        <label>SPAG5</label>
    </interactant>
    <organismsDiffer>false</organismsDiffer>
    <experiments>3</experiments>
</comment>
<comment type="interaction">
    <interactant intactId="EBI-10244848">
        <id>Q5SQN1</id>
    </interactant>
    <interactant intactId="EBI-2691717">
        <id>Q86Y82</id>
        <label>STX12</label>
    </interactant>
    <organismsDiffer>false</organismsDiffer>
    <experiments>5</experiments>
</comment>
<comment type="interaction">
    <interactant intactId="EBI-10244848">
        <id>Q5SQN1</id>
    </interactant>
    <interactant intactId="EBI-712466">
        <id>Q16623</id>
        <label>STX1A</label>
    </interactant>
    <organismsDiffer>false</organismsDiffer>
    <experiments>3</experiments>
</comment>
<comment type="interaction">
    <interactant intactId="EBI-10244848">
        <id>Q5SQN1</id>
    </interactant>
    <interactant intactId="EBI-9071709">
        <id>P61266</id>
        <label>STX1B</label>
    </interactant>
    <organismsDiffer>false</organismsDiffer>
    <experiments>3</experiments>
</comment>
<comment type="interaction">
    <interactant intactId="EBI-10244848">
        <id>Q5SQN1</id>
    </interactant>
    <interactant intactId="EBI-744942">
        <id>Q12846</id>
        <label>STX4</label>
    </interactant>
    <organismsDiffer>false</organismsDiffer>
    <experiments>3</experiments>
</comment>
<comment type="interaction">
    <interactant intactId="EBI-10244848">
        <id>Q5SQN1</id>
    </interactant>
    <interactant intactId="EBI-10262539">
        <id>Q8IWR1</id>
        <label>TRIM59</label>
    </interactant>
    <organismsDiffer>false</organismsDiffer>
    <experiments>3</experiments>
</comment>
<comment type="interaction">
    <interactant intactId="EBI-10244848">
        <id>Q5SQN1</id>
    </interactant>
    <interactant intactId="EBI-744953">
        <id>O75379</id>
        <label>VAMP4</label>
    </interactant>
    <organismsDiffer>false</organismsDiffer>
    <experiments>3</experiments>
</comment>
<comment type="interaction">
    <interactant intactId="EBI-10244848">
        <id>Q5SQN1</id>
    </interactant>
    <interactant intactId="EBI-1052205">
        <id>P51809</id>
        <label>VAMP7</label>
    </interactant>
    <organismsDiffer>false</organismsDiffer>
    <experiments>4</experiments>
</comment>
<comment type="interaction">
    <interactant intactId="EBI-10244848">
        <id>Q5SQN1</id>
    </interactant>
    <interactant intactId="EBI-25475825">
        <id>PRO_0000037316</id>
        <label>rep</label>
        <dbReference type="UniProtKB" id="P0C6X7"/>
    </interactant>
    <organismsDiffer>true</organismsDiffer>
    <experiments>2</experiments>
</comment>
<comment type="interaction">
    <interactant intactId="EBI-10244848">
        <id>Q5SQN1</id>
    </interactant>
    <interactant intactId="EBI-539720">
        <id>P32851</id>
        <label>Stx1a</label>
    </interactant>
    <organismsDiffer>true</organismsDiffer>
    <experiments>3</experiments>
</comment>
<comment type="subcellular location">
    <subcellularLocation>
        <location evidence="1">Endomembrane system</location>
    </subcellularLocation>
    <subcellularLocation>
        <location evidence="1">Cytoplasm</location>
        <location evidence="1">Perinuclear region</location>
    </subcellularLocation>
    <text evidence="1">Appears to be exclusively membrane-bound.</text>
</comment>
<comment type="alternative products">
    <event type="alternative splicing"/>
    <isoform>
        <id>Q5SQN1-1</id>
        <name>1</name>
        <sequence type="displayed"/>
    </isoform>
    <isoform>
        <id>Q5SQN1-2</id>
        <name>2</name>
        <sequence type="described" ref="VSP_028614"/>
    </isoform>
    <isoform>
        <id>Q5SQN1-3</id>
        <name>3</name>
        <sequence type="described" ref="VSP_028613 VSP_028614"/>
    </isoform>
    <isoform>
        <id>Q5SQN1-4</id>
        <name>4</name>
        <sequence type="described" ref="VSP_028613"/>
    </isoform>
</comment>
<comment type="similarity">
    <text evidence="11">Belongs to the SVAP1 family.</text>
</comment>
<comment type="sequence caution" evidence="11">
    <conflict type="erroneous initiation">
        <sequence resource="EMBL-CDS" id="BAB70779"/>
    </conflict>
    <text>Truncated N-terminus.</text>
</comment>
<proteinExistence type="evidence at protein level"/>